<protein>
    <recommendedName>
        <fullName evidence="1">DNA-directed RNA polymerase subunit omega</fullName>
        <shortName evidence="1">RNAP omega subunit</shortName>
        <ecNumber evidence="1">2.7.7.6</ecNumber>
    </recommendedName>
    <alternativeName>
        <fullName evidence="1">RNA polymerase omega subunit</fullName>
    </alternativeName>
    <alternativeName>
        <fullName evidence="1">Transcriptase subunit omega</fullName>
    </alternativeName>
</protein>
<comment type="function">
    <text evidence="1">Promotes RNA polymerase assembly. Latches the N- and C-terminal regions of the beta' subunit thereby facilitating its interaction with the beta and alpha subunits.</text>
</comment>
<comment type="catalytic activity">
    <reaction evidence="1">
        <text>RNA(n) + a ribonucleoside 5'-triphosphate = RNA(n+1) + diphosphate</text>
        <dbReference type="Rhea" id="RHEA:21248"/>
        <dbReference type="Rhea" id="RHEA-COMP:14527"/>
        <dbReference type="Rhea" id="RHEA-COMP:17342"/>
        <dbReference type="ChEBI" id="CHEBI:33019"/>
        <dbReference type="ChEBI" id="CHEBI:61557"/>
        <dbReference type="ChEBI" id="CHEBI:140395"/>
        <dbReference type="EC" id="2.7.7.6"/>
    </reaction>
</comment>
<comment type="subunit">
    <text evidence="1">The RNAP catalytic core consists of 2 alpha, 1 beta, 1 beta' and 1 omega subunit. When a sigma factor is associated with the core the holoenzyme is formed, which can initiate transcription.</text>
</comment>
<comment type="similarity">
    <text evidence="1">Belongs to the RNA polymerase subunit omega family.</text>
</comment>
<reference key="1">
    <citation type="submission" date="2007-10" db="EMBL/GenBank/DDBJ databases">
        <title>Brucella canis ATCC 23365 whole genome shotgun sequencing project.</title>
        <authorList>
            <person name="Setubal J.C."/>
            <person name="Bowns C."/>
            <person name="Boyle S."/>
            <person name="Crasta O.R."/>
            <person name="Czar M.J."/>
            <person name="Dharmanolla C."/>
            <person name="Gillespie J.J."/>
            <person name="Kenyon R.W."/>
            <person name="Lu J."/>
            <person name="Mane S."/>
            <person name="Mohapatra S."/>
            <person name="Nagrani S."/>
            <person name="Purkayastha A."/>
            <person name="Rajasimha H.K."/>
            <person name="Shallom J.M."/>
            <person name="Shallom S."/>
            <person name="Shukla M."/>
            <person name="Snyder E.E."/>
            <person name="Sobral B.W."/>
            <person name="Wattam A.R."/>
            <person name="Will R."/>
            <person name="Williams K."/>
            <person name="Yoo H."/>
            <person name="Bruce D."/>
            <person name="Detter C."/>
            <person name="Munk C."/>
            <person name="Brettin T.S."/>
        </authorList>
    </citation>
    <scope>NUCLEOTIDE SEQUENCE [LARGE SCALE GENOMIC DNA]</scope>
    <source>
        <strain>ATCC 23365 / NCTC 10854 / RM-666</strain>
    </source>
</reference>
<organism>
    <name type="scientific">Brucella canis (strain ATCC 23365 / NCTC 10854 / RM-666)</name>
    <dbReference type="NCBI Taxonomy" id="483179"/>
    <lineage>
        <taxon>Bacteria</taxon>
        <taxon>Pseudomonadati</taxon>
        <taxon>Pseudomonadota</taxon>
        <taxon>Alphaproteobacteria</taxon>
        <taxon>Hyphomicrobiales</taxon>
        <taxon>Brucellaceae</taxon>
        <taxon>Brucella/Ochrobactrum group</taxon>
        <taxon>Brucella</taxon>
    </lineage>
</organism>
<name>RPOZ_BRUC2</name>
<evidence type="ECO:0000255" key="1">
    <source>
        <dbReference type="HAMAP-Rule" id="MF_00366"/>
    </source>
</evidence>
<keyword id="KW-0240">DNA-directed RNA polymerase</keyword>
<keyword id="KW-0548">Nucleotidyltransferase</keyword>
<keyword id="KW-1185">Reference proteome</keyword>
<keyword id="KW-0804">Transcription</keyword>
<keyword id="KW-0808">Transferase</keyword>
<sequence length="133" mass="14542">MARVTVEDCVDKVENRFELVLLAGHRARQISQGVPITVDRDNDKNPVVALREIADETLSPDDLKEDLIHSLQKHVEVDEPEAAPAQIANAAEEIAEGIAEAGEEDVVTFDRMSEEELLAGIEGLVAPEKNDGF</sequence>
<feature type="chain" id="PRO_1000079616" description="DNA-directed RNA polymerase subunit omega">
    <location>
        <begin position="1"/>
        <end position="133"/>
    </location>
</feature>
<dbReference type="EC" id="2.7.7.6" evidence="1"/>
<dbReference type="EMBL" id="CP000872">
    <property type="protein sequence ID" value="ABX61738.1"/>
    <property type="molecule type" value="Genomic_DNA"/>
</dbReference>
<dbReference type="RefSeq" id="WP_004690699.1">
    <property type="nucleotide sequence ID" value="NC_010103.1"/>
</dbReference>
<dbReference type="SMR" id="A9MA26"/>
<dbReference type="GeneID" id="55590377"/>
<dbReference type="KEGG" id="bcs:BCAN_A0664"/>
<dbReference type="HOGENOM" id="CLU_125406_2_0_5"/>
<dbReference type="PhylomeDB" id="A9MA26"/>
<dbReference type="Proteomes" id="UP000001385">
    <property type="component" value="Chromosome I"/>
</dbReference>
<dbReference type="GO" id="GO:0000428">
    <property type="term" value="C:DNA-directed RNA polymerase complex"/>
    <property type="evidence" value="ECO:0007669"/>
    <property type="project" value="UniProtKB-KW"/>
</dbReference>
<dbReference type="GO" id="GO:0003677">
    <property type="term" value="F:DNA binding"/>
    <property type="evidence" value="ECO:0007669"/>
    <property type="project" value="UniProtKB-UniRule"/>
</dbReference>
<dbReference type="GO" id="GO:0003899">
    <property type="term" value="F:DNA-directed RNA polymerase activity"/>
    <property type="evidence" value="ECO:0007669"/>
    <property type="project" value="UniProtKB-UniRule"/>
</dbReference>
<dbReference type="GO" id="GO:0006351">
    <property type="term" value="P:DNA-templated transcription"/>
    <property type="evidence" value="ECO:0007669"/>
    <property type="project" value="UniProtKB-UniRule"/>
</dbReference>
<dbReference type="Gene3D" id="3.90.940.10">
    <property type="match status" value="1"/>
</dbReference>
<dbReference type="HAMAP" id="MF_00366">
    <property type="entry name" value="RNApol_bact_RpoZ"/>
    <property type="match status" value="1"/>
</dbReference>
<dbReference type="InterPro" id="IPR003716">
    <property type="entry name" value="DNA-dir_RNA_pol_omega"/>
</dbReference>
<dbReference type="InterPro" id="IPR006110">
    <property type="entry name" value="Pol_omega/Rpo6/RPB6"/>
</dbReference>
<dbReference type="InterPro" id="IPR036161">
    <property type="entry name" value="RPB6/omega-like_sf"/>
</dbReference>
<dbReference type="NCBIfam" id="TIGR00690">
    <property type="entry name" value="rpoZ"/>
    <property type="match status" value="1"/>
</dbReference>
<dbReference type="PANTHER" id="PTHR34476">
    <property type="entry name" value="DNA-DIRECTED RNA POLYMERASE SUBUNIT OMEGA"/>
    <property type="match status" value="1"/>
</dbReference>
<dbReference type="PANTHER" id="PTHR34476:SF1">
    <property type="entry name" value="DNA-DIRECTED RNA POLYMERASE SUBUNIT OMEGA"/>
    <property type="match status" value="1"/>
</dbReference>
<dbReference type="Pfam" id="PF01192">
    <property type="entry name" value="RNA_pol_Rpb6"/>
    <property type="match status" value="1"/>
</dbReference>
<dbReference type="SMART" id="SM01409">
    <property type="entry name" value="RNA_pol_Rpb6"/>
    <property type="match status" value="1"/>
</dbReference>
<dbReference type="SUPFAM" id="SSF63562">
    <property type="entry name" value="RPB6/omega subunit-like"/>
    <property type="match status" value="1"/>
</dbReference>
<accession>A9MA26</accession>
<proteinExistence type="inferred from homology"/>
<gene>
    <name evidence="1" type="primary">rpoZ</name>
    <name type="ordered locus">BCAN_A0664</name>
</gene>